<protein>
    <recommendedName>
        <fullName>Protein argonaute 1B</fullName>
        <shortName>OsAGO1b</shortName>
    </recommendedName>
</protein>
<reference key="1">
    <citation type="journal article" date="2002" name="Nature">
        <title>Sequence and analysis of rice chromosome 4.</title>
        <authorList>
            <person name="Feng Q."/>
            <person name="Zhang Y."/>
            <person name="Hao P."/>
            <person name="Wang S."/>
            <person name="Fu G."/>
            <person name="Huang Y."/>
            <person name="Li Y."/>
            <person name="Zhu J."/>
            <person name="Liu Y."/>
            <person name="Hu X."/>
            <person name="Jia P."/>
            <person name="Zhang Y."/>
            <person name="Zhao Q."/>
            <person name="Ying K."/>
            <person name="Yu S."/>
            <person name="Tang Y."/>
            <person name="Weng Q."/>
            <person name="Zhang L."/>
            <person name="Lu Y."/>
            <person name="Mu J."/>
            <person name="Lu Y."/>
            <person name="Zhang L.S."/>
            <person name="Yu Z."/>
            <person name="Fan D."/>
            <person name="Liu X."/>
            <person name="Lu T."/>
            <person name="Li C."/>
            <person name="Wu Y."/>
            <person name="Sun T."/>
            <person name="Lei H."/>
            <person name="Li T."/>
            <person name="Hu H."/>
            <person name="Guan J."/>
            <person name="Wu M."/>
            <person name="Zhang R."/>
            <person name="Zhou B."/>
            <person name="Chen Z."/>
            <person name="Chen L."/>
            <person name="Jin Z."/>
            <person name="Wang R."/>
            <person name="Yin H."/>
            <person name="Cai Z."/>
            <person name="Ren S."/>
            <person name="Lv G."/>
            <person name="Gu W."/>
            <person name="Zhu G."/>
            <person name="Tu Y."/>
            <person name="Jia J."/>
            <person name="Zhang Y."/>
            <person name="Chen J."/>
            <person name="Kang H."/>
            <person name="Chen X."/>
            <person name="Shao C."/>
            <person name="Sun Y."/>
            <person name="Hu Q."/>
            <person name="Zhang X."/>
            <person name="Zhang W."/>
            <person name="Wang L."/>
            <person name="Ding C."/>
            <person name="Sheng H."/>
            <person name="Gu J."/>
            <person name="Chen S."/>
            <person name="Ni L."/>
            <person name="Zhu F."/>
            <person name="Chen W."/>
            <person name="Lan L."/>
            <person name="Lai Y."/>
            <person name="Cheng Z."/>
            <person name="Gu M."/>
            <person name="Jiang J."/>
            <person name="Li J."/>
            <person name="Hong G."/>
            <person name="Xue Y."/>
            <person name="Han B."/>
        </authorList>
    </citation>
    <scope>NUCLEOTIDE SEQUENCE [LARGE SCALE GENOMIC DNA]</scope>
    <source>
        <strain>cv. Nipponbare</strain>
    </source>
</reference>
<reference key="2">
    <citation type="journal article" date="2005" name="Nature">
        <title>The map-based sequence of the rice genome.</title>
        <authorList>
            <consortium name="International rice genome sequencing project (IRGSP)"/>
        </authorList>
    </citation>
    <scope>NUCLEOTIDE SEQUENCE [LARGE SCALE GENOMIC DNA]</scope>
    <source>
        <strain>cv. Nipponbare</strain>
    </source>
</reference>
<reference key="3">
    <citation type="journal article" date="2008" name="Nucleic Acids Res.">
        <title>The rice annotation project database (RAP-DB): 2008 update.</title>
        <authorList>
            <consortium name="The rice annotation project (RAP)"/>
        </authorList>
    </citation>
    <scope>GENOME REANNOTATION</scope>
    <source>
        <strain>cv. Nipponbare</strain>
    </source>
</reference>
<reference key="4">
    <citation type="journal article" date="2013" name="Rice">
        <title>Improvement of the Oryza sativa Nipponbare reference genome using next generation sequence and optical map data.</title>
        <authorList>
            <person name="Kawahara Y."/>
            <person name="de la Bastide M."/>
            <person name="Hamilton J.P."/>
            <person name="Kanamori H."/>
            <person name="McCombie W.R."/>
            <person name="Ouyang S."/>
            <person name="Schwartz D.C."/>
            <person name="Tanaka T."/>
            <person name="Wu J."/>
            <person name="Zhou S."/>
            <person name="Childs K.L."/>
            <person name="Davidson R.M."/>
            <person name="Lin H."/>
            <person name="Quesada-Ocampo L."/>
            <person name="Vaillancourt B."/>
            <person name="Sakai H."/>
            <person name="Lee S.S."/>
            <person name="Kim J."/>
            <person name="Numa H."/>
            <person name="Itoh T."/>
            <person name="Buell C.R."/>
            <person name="Matsumoto T."/>
        </authorList>
    </citation>
    <scope>GENOME REANNOTATION</scope>
    <source>
        <strain>cv. Nipponbare</strain>
    </source>
</reference>
<reference key="5">
    <citation type="journal article" date="2003" name="Science">
        <title>Collection, mapping, and annotation of over 28,000 cDNA clones from japonica rice.</title>
        <authorList>
            <consortium name="The rice full-length cDNA consortium"/>
        </authorList>
    </citation>
    <scope>NUCLEOTIDE SEQUENCE [LARGE SCALE MRNA] (ISOFORM 2)</scope>
    <source>
        <strain>cv. Nipponbare</strain>
    </source>
</reference>
<reference key="6">
    <citation type="journal article" date="2008" name="BMC Genomics">
        <title>Genome-wide identification, organization and phylogenetic analysis of dicer-like, argonaute and RNA-dependent RNA polymerase gene families and their expression analysis during reproductive development and stress in rice.</title>
        <authorList>
            <person name="Kapoor M."/>
            <person name="Arora R."/>
            <person name="Lama T."/>
            <person name="Nijhawan A."/>
            <person name="Khurana J.P."/>
            <person name="Tyagi A.K."/>
            <person name="Kapoor S."/>
        </authorList>
    </citation>
    <scope>GENE FAMILY</scope>
    <scope>NOMENCLATURE</scope>
</reference>
<sequence>MALQLENGRPHHHQVPIMVKKKRTGSGSTGESSGEAPGAPGHGSSQRAERGPQQHGGGRGWVPQHGGRGGGQYQGRGGHYQGRGGQGSHHPGGGPPEYQGRGGPGSHHPGGGPPDYQGRGGSGSHHPGGGPPEYQPRDYQGRGGPRPRGGMPQPYYGGPRGSGGRSVPSGSSRTVPELHQAPHVQYQAPMVSPTPSGAGSSSQPAAEVSSGQVQQQFQQLATRDQSSTSQAIQIAPPSSKSVRFPLRPGKGTYGDRCIVKANHFFAELPDKDLHQYDVSITPEVTSRGVNRAVMFELVTLYRYSHLGGRLPAYDGRKSLYTAGPLPFASRTFEITLQDEEDSLGGGQGTQRRERLFRVVIKFAARADLHHLAMFLAGRQADAPQEALQVLDIVLRELPTTRYSPVGRSFYSPNLGRRQQLGEGLESWRGFYQSIRPTQMGLSLNIDMSSTAFIEPLPVIDFVAQLLNRDISVRPLSDSDRVKIKKALRGVKVEVTHRGNMRRKYRISGLTSQATRELSFPVDDRGTVKTVVQYFLETYGFSIQHTTLPCLQVGNQQRPNYLPMEVCKIVEGQRYSKRLNEKQITALLKVTCQRPQERELDILRTVSHNAYHEDQYAQEFGIKIDERLASVEARVLPPPRLKYHDSGREKDVLPRVGQWNMMNKKMVNGGRVNNWACINFSRNVQDSAARGFCHELAIMCQISGMDFALEPVLPPLTARPEHVERALKARYQDAMNMLRPQGRELDLLIVILPDNNGSLYGDLKRICETDLGLVSQCCLTKHVFKMSKQYLANVALKINVKVGGRNTVLVDALTRRIPLVSDRPTIIFGADVTHPHPGEDSSPSIAAVVASQDWPEVTKYAGLVSAQAHRQELIQDLFKVWQDPHRGTVTGGMIKELLISFKRATGQKPQRIIFYRDGVSEGQFYQVLLYELDAIRKACASLEPNYQPPVTFVVVQKRHHTRLFANNHNDQRTVDRSGNILPGTVVDSKICHPTEFDFYLCSHAGIQGTSRPAHYHVLWDENKFTADELQTLTNNLCYTYARCTRSVSIVPPAYYAHLAAFRARFYMEPETSDSGSMASGAATSRGLPPGVRSARVAGNVAVRPLPALKENVKRVMFYC</sequence>
<name>AGO1B_ORYSJ</name>
<keyword id="KW-0025">Alternative splicing</keyword>
<keyword id="KW-1185">Reference proteome</keyword>
<keyword id="KW-0943">RNA-mediated gene silencing</keyword>
<dbReference type="EMBL" id="AL662954">
    <property type="protein sequence ID" value="CAE02070.2"/>
    <property type="molecule type" value="Genomic_DNA"/>
</dbReference>
<dbReference type="EMBL" id="AP008210">
    <property type="protein sequence ID" value="BAF15495.1"/>
    <property type="status" value="ALT_SEQ"/>
    <property type="molecule type" value="Genomic_DNA"/>
</dbReference>
<dbReference type="EMBL" id="AP014960">
    <property type="protein sequence ID" value="BAS90531.1"/>
    <property type="molecule type" value="Genomic_DNA"/>
</dbReference>
<dbReference type="EMBL" id="AK111587">
    <property type="protein sequence ID" value="BAG99319.1"/>
    <property type="molecule type" value="mRNA"/>
</dbReference>
<dbReference type="RefSeq" id="XP_015636291.1">
    <property type="nucleotide sequence ID" value="XM_015780805.1"/>
</dbReference>
<dbReference type="RefSeq" id="XP_015636292.1">
    <property type="nucleotide sequence ID" value="XM_015780806.1"/>
</dbReference>
<dbReference type="SMR" id="Q7XSA2"/>
<dbReference type="FunCoup" id="Q7XSA2">
    <property type="interactions" value="2965"/>
</dbReference>
<dbReference type="STRING" id="39947.Q7XSA2"/>
<dbReference type="PaxDb" id="39947-Q7XSA2"/>
<dbReference type="EnsemblPlants" id="Os04t0566500-05">
    <molecule id="Q7XSA2-1"/>
    <property type="protein sequence ID" value="Os04t0566500-05"/>
    <property type="gene ID" value="Os04g0566500"/>
</dbReference>
<dbReference type="Gramene" id="Os04t0566500-05">
    <molecule id="Q7XSA2-1"/>
    <property type="protein sequence ID" value="Os04t0566500-05"/>
    <property type="gene ID" value="Os04g0566500"/>
</dbReference>
<dbReference type="eggNOG" id="KOG1041">
    <property type="taxonomic scope" value="Eukaryota"/>
</dbReference>
<dbReference type="HOGENOM" id="CLU_004544_0_0_1"/>
<dbReference type="InParanoid" id="Q7XSA2"/>
<dbReference type="OMA" id="CFAQQQH"/>
<dbReference type="OrthoDB" id="10252740at2759"/>
<dbReference type="Proteomes" id="UP000000763">
    <property type="component" value="Chromosome 4"/>
</dbReference>
<dbReference type="Proteomes" id="UP000059680">
    <property type="component" value="Chromosome 4"/>
</dbReference>
<dbReference type="GO" id="GO:0005737">
    <property type="term" value="C:cytoplasm"/>
    <property type="evidence" value="ECO:0000318"/>
    <property type="project" value="GO_Central"/>
</dbReference>
<dbReference type="GO" id="GO:0005634">
    <property type="term" value="C:nucleus"/>
    <property type="evidence" value="ECO:0000318"/>
    <property type="project" value="GO_Central"/>
</dbReference>
<dbReference type="GO" id="GO:0003723">
    <property type="term" value="F:RNA binding"/>
    <property type="evidence" value="ECO:0000318"/>
    <property type="project" value="GO_Central"/>
</dbReference>
<dbReference type="GO" id="GO:0004521">
    <property type="term" value="F:RNA endonuclease activity"/>
    <property type="evidence" value="ECO:0000318"/>
    <property type="project" value="GO_Central"/>
</dbReference>
<dbReference type="GO" id="GO:0031047">
    <property type="term" value="P:regulatory ncRNA-mediated gene silencing"/>
    <property type="evidence" value="ECO:0000318"/>
    <property type="project" value="GO_Central"/>
</dbReference>
<dbReference type="CDD" id="cd02846">
    <property type="entry name" value="PAZ_argonaute_like"/>
    <property type="match status" value="1"/>
</dbReference>
<dbReference type="CDD" id="cd04657">
    <property type="entry name" value="Piwi_ago-like"/>
    <property type="match status" value="1"/>
</dbReference>
<dbReference type="FunFam" id="3.40.50.2300:FF:000110">
    <property type="entry name" value="Argonaute 10"/>
    <property type="match status" value="1"/>
</dbReference>
<dbReference type="FunFam" id="3.30.420.10:FF:000013">
    <property type="entry name" value="protein argonaute 10-like"/>
    <property type="match status" value="1"/>
</dbReference>
<dbReference type="FunFam" id="2.170.260.10:FF:000001">
    <property type="entry name" value="Protein argonaute-2"/>
    <property type="match status" value="1"/>
</dbReference>
<dbReference type="Gene3D" id="3.40.50.2300">
    <property type="match status" value="1"/>
</dbReference>
<dbReference type="Gene3D" id="2.170.260.10">
    <property type="entry name" value="paz domain"/>
    <property type="match status" value="1"/>
</dbReference>
<dbReference type="Gene3D" id="3.30.420.10">
    <property type="entry name" value="Ribonuclease H-like superfamily/Ribonuclease H"/>
    <property type="match status" value="1"/>
</dbReference>
<dbReference type="InterPro" id="IPR014811">
    <property type="entry name" value="ArgoL1"/>
</dbReference>
<dbReference type="InterPro" id="IPR032472">
    <property type="entry name" value="ArgoL2"/>
</dbReference>
<dbReference type="InterPro" id="IPR024357">
    <property type="entry name" value="Argonaut_Gly-rich"/>
</dbReference>
<dbReference type="InterPro" id="IPR032473">
    <property type="entry name" value="Argonaute_Mid_dom"/>
</dbReference>
<dbReference type="InterPro" id="IPR032474">
    <property type="entry name" value="Argonaute_N"/>
</dbReference>
<dbReference type="InterPro" id="IPR003100">
    <property type="entry name" value="PAZ_dom"/>
</dbReference>
<dbReference type="InterPro" id="IPR036085">
    <property type="entry name" value="PAZ_dom_sf"/>
</dbReference>
<dbReference type="InterPro" id="IPR003165">
    <property type="entry name" value="Piwi"/>
</dbReference>
<dbReference type="InterPro" id="IPR045246">
    <property type="entry name" value="Piwi_ago-like"/>
</dbReference>
<dbReference type="InterPro" id="IPR012337">
    <property type="entry name" value="RNaseH-like_sf"/>
</dbReference>
<dbReference type="InterPro" id="IPR036397">
    <property type="entry name" value="RNaseH_sf"/>
</dbReference>
<dbReference type="PANTHER" id="PTHR22891">
    <property type="entry name" value="EUKARYOTIC TRANSLATION INITIATION FACTOR 2C"/>
    <property type="match status" value="1"/>
</dbReference>
<dbReference type="Pfam" id="PF08699">
    <property type="entry name" value="ArgoL1"/>
    <property type="match status" value="1"/>
</dbReference>
<dbReference type="Pfam" id="PF16488">
    <property type="entry name" value="ArgoL2"/>
    <property type="match status" value="1"/>
</dbReference>
<dbReference type="Pfam" id="PF16487">
    <property type="entry name" value="ArgoMid"/>
    <property type="match status" value="1"/>
</dbReference>
<dbReference type="Pfam" id="PF16486">
    <property type="entry name" value="ArgoN"/>
    <property type="match status" value="1"/>
</dbReference>
<dbReference type="Pfam" id="PF12764">
    <property type="entry name" value="Gly-rich_Ago1"/>
    <property type="match status" value="1"/>
</dbReference>
<dbReference type="Pfam" id="PF02170">
    <property type="entry name" value="PAZ"/>
    <property type="match status" value="1"/>
</dbReference>
<dbReference type="Pfam" id="PF02171">
    <property type="entry name" value="Piwi"/>
    <property type="match status" value="1"/>
</dbReference>
<dbReference type="SMART" id="SM01163">
    <property type="entry name" value="DUF1785"/>
    <property type="match status" value="1"/>
</dbReference>
<dbReference type="SMART" id="SM00949">
    <property type="entry name" value="PAZ"/>
    <property type="match status" value="1"/>
</dbReference>
<dbReference type="SMART" id="SM00950">
    <property type="entry name" value="Piwi"/>
    <property type="match status" value="1"/>
</dbReference>
<dbReference type="SUPFAM" id="SSF101690">
    <property type="entry name" value="PAZ domain"/>
    <property type="match status" value="1"/>
</dbReference>
<dbReference type="SUPFAM" id="SSF53098">
    <property type="entry name" value="Ribonuclease H-like"/>
    <property type="match status" value="1"/>
</dbReference>
<dbReference type="PROSITE" id="PS50821">
    <property type="entry name" value="PAZ"/>
    <property type="match status" value="1"/>
</dbReference>
<dbReference type="PROSITE" id="PS50822">
    <property type="entry name" value="PIWI"/>
    <property type="match status" value="1"/>
</dbReference>
<organism>
    <name type="scientific">Oryza sativa subsp. japonica</name>
    <name type="common">Rice</name>
    <dbReference type="NCBI Taxonomy" id="39947"/>
    <lineage>
        <taxon>Eukaryota</taxon>
        <taxon>Viridiplantae</taxon>
        <taxon>Streptophyta</taxon>
        <taxon>Embryophyta</taxon>
        <taxon>Tracheophyta</taxon>
        <taxon>Spermatophyta</taxon>
        <taxon>Magnoliopsida</taxon>
        <taxon>Liliopsida</taxon>
        <taxon>Poales</taxon>
        <taxon>Poaceae</taxon>
        <taxon>BOP clade</taxon>
        <taxon>Oryzoideae</taxon>
        <taxon>Oryzeae</taxon>
        <taxon>Oryzinae</taxon>
        <taxon>Oryza</taxon>
        <taxon>Oryza sativa</taxon>
    </lineage>
</organism>
<comment type="function">
    <text evidence="1">Probably involved in the RNA silencing pathway. May bind to short RNAs such as microRNAs (miRNAs) or short interfering RNAs (siRNAs), and represses the translation of mRNAs which are complementary to them (By similarity).</text>
</comment>
<comment type="alternative products">
    <event type="alternative splicing"/>
    <isoform>
        <id>Q7XSA2-1</id>
        <name>1</name>
        <sequence type="displayed"/>
    </isoform>
    <isoform>
        <id>Q7XSA2-2</id>
        <name>2</name>
        <sequence type="described" ref="VSP_037581"/>
    </isoform>
</comment>
<comment type="similarity">
    <text evidence="6">Belongs to the argonaute family. Ago subfamily.</text>
</comment>
<comment type="sequence caution" evidence="6">
    <conflict type="erroneous gene model prediction">
        <sequence resource="EMBL-CDS" id="BAF15495"/>
    </conflict>
</comment>
<proteinExistence type="evidence at transcript level"/>
<accession>Q7XSA2</accession>
<accession>Q0JAZ2</accession>
<feature type="chain" id="PRO_0000378426" description="Protein argonaute 1B">
    <location>
        <begin position="1"/>
        <end position="1118"/>
    </location>
</feature>
<feature type="domain" description="PAZ" evidence="2">
    <location>
        <begin position="457"/>
        <end position="570"/>
    </location>
</feature>
<feature type="domain" description="Piwi" evidence="3">
    <location>
        <begin position="746"/>
        <end position="1067"/>
    </location>
</feature>
<feature type="region of interest" description="Disordered" evidence="4">
    <location>
        <begin position="1"/>
        <end position="175"/>
    </location>
</feature>
<feature type="region of interest" description="Disordered" evidence="4">
    <location>
        <begin position="188"/>
        <end position="246"/>
    </location>
</feature>
<feature type="compositionally biased region" description="Basic residues" evidence="4">
    <location>
        <begin position="10"/>
        <end position="24"/>
    </location>
</feature>
<feature type="compositionally biased region" description="Low complexity" evidence="4">
    <location>
        <begin position="25"/>
        <end position="35"/>
    </location>
</feature>
<feature type="compositionally biased region" description="Gly residues" evidence="4">
    <location>
        <begin position="54"/>
        <end position="92"/>
    </location>
</feature>
<feature type="compositionally biased region" description="Gly residues" evidence="4">
    <location>
        <begin position="100"/>
        <end position="110"/>
    </location>
</feature>
<feature type="compositionally biased region" description="Gly residues" evidence="4">
    <location>
        <begin position="118"/>
        <end position="128"/>
    </location>
</feature>
<feature type="compositionally biased region" description="Low complexity" evidence="4">
    <location>
        <begin position="148"/>
        <end position="157"/>
    </location>
</feature>
<feature type="compositionally biased region" description="Low complexity" evidence="4">
    <location>
        <begin position="193"/>
        <end position="219"/>
    </location>
</feature>
<feature type="compositionally biased region" description="Polar residues" evidence="4">
    <location>
        <begin position="220"/>
        <end position="241"/>
    </location>
</feature>
<feature type="splice variant" id="VSP_037581" description="In isoform 2." evidence="5">
    <location>
        <begin position="1"/>
        <end position="17"/>
    </location>
</feature>
<gene>
    <name type="primary">AGO1B</name>
    <name type="ordered locus">Os04g0566500</name>
    <name type="ordered locus">LOC_Os04g47870</name>
    <name type="ORF">OSJNBa0005N02.3</name>
</gene>
<evidence type="ECO:0000250" key="1"/>
<evidence type="ECO:0000255" key="2">
    <source>
        <dbReference type="PROSITE-ProRule" id="PRU00142"/>
    </source>
</evidence>
<evidence type="ECO:0000255" key="3">
    <source>
        <dbReference type="PROSITE-ProRule" id="PRU00150"/>
    </source>
</evidence>
<evidence type="ECO:0000256" key="4">
    <source>
        <dbReference type="SAM" id="MobiDB-lite"/>
    </source>
</evidence>
<evidence type="ECO:0000303" key="5">
    <source>
    </source>
</evidence>
<evidence type="ECO:0000305" key="6"/>